<comment type="function">
    <text evidence="1">May play a role in DNA repair. It seems to be involved in an RecBC-independent recombinational process of DNA repair. It may act with RecF and RecO.</text>
</comment>
<comment type="similarity">
    <text evidence="1">Belongs to the RecR family.</text>
</comment>
<keyword id="KW-0227">DNA damage</keyword>
<keyword id="KW-0233">DNA recombination</keyword>
<keyword id="KW-0234">DNA repair</keyword>
<keyword id="KW-0479">Metal-binding</keyword>
<keyword id="KW-1185">Reference proteome</keyword>
<keyword id="KW-0862">Zinc</keyword>
<keyword id="KW-0863">Zinc-finger</keyword>
<organism>
    <name type="scientific">Lachnoclostridium phytofermentans (strain ATCC 700394 / DSM 18823 / ISDg)</name>
    <name type="common">Clostridium phytofermentans</name>
    <dbReference type="NCBI Taxonomy" id="357809"/>
    <lineage>
        <taxon>Bacteria</taxon>
        <taxon>Bacillati</taxon>
        <taxon>Bacillota</taxon>
        <taxon>Clostridia</taxon>
        <taxon>Lachnospirales</taxon>
        <taxon>Lachnospiraceae</taxon>
    </lineage>
</organism>
<dbReference type="EMBL" id="CP000885">
    <property type="protein sequence ID" value="ABX40438.1"/>
    <property type="molecule type" value="Genomic_DNA"/>
</dbReference>
<dbReference type="RefSeq" id="WP_012198081.1">
    <property type="nucleotide sequence ID" value="NC_010001.1"/>
</dbReference>
<dbReference type="SMR" id="A9KQC9"/>
<dbReference type="STRING" id="357809.Cphy_0048"/>
<dbReference type="KEGG" id="cpy:Cphy_0048"/>
<dbReference type="eggNOG" id="COG0353">
    <property type="taxonomic scope" value="Bacteria"/>
</dbReference>
<dbReference type="HOGENOM" id="CLU_060739_1_0_9"/>
<dbReference type="OrthoDB" id="9802672at2"/>
<dbReference type="Proteomes" id="UP000000370">
    <property type="component" value="Chromosome"/>
</dbReference>
<dbReference type="GO" id="GO:0003677">
    <property type="term" value="F:DNA binding"/>
    <property type="evidence" value="ECO:0007669"/>
    <property type="project" value="UniProtKB-UniRule"/>
</dbReference>
<dbReference type="GO" id="GO:0008270">
    <property type="term" value="F:zinc ion binding"/>
    <property type="evidence" value="ECO:0007669"/>
    <property type="project" value="UniProtKB-KW"/>
</dbReference>
<dbReference type="GO" id="GO:0006310">
    <property type="term" value="P:DNA recombination"/>
    <property type="evidence" value="ECO:0007669"/>
    <property type="project" value="UniProtKB-UniRule"/>
</dbReference>
<dbReference type="GO" id="GO:0006281">
    <property type="term" value="P:DNA repair"/>
    <property type="evidence" value="ECO:0007669"/>
    <property type="project" value="UniProtKB-UniRule"/>
</dbReference>
<dbReference type="CDD" id="cd01025">
    <property type="entry name" value="TOPRIM_recR"/>
    <property type="match status" value="1"/>
</dbReference>
<dbReference type="Gene3D" id="3.30.60.80">
    <property type="match status" value="1"/>
</dbReference>
<dbReference type="Gene3D" id="3.40.1360.10">
    <property type="match status" value="1"/>
</dbReference>
<dbReference type="Gene3D" id="6.10.250.240">
    <property type="match status" value="1"/>
</dbReference>
<dbReference type="Gene3D" id="1.10.8.420">
    <property type="entry name" value="RecR Domain 1"/>
    <property type="match status" value="1"/>
</dbReference>
<dbReference type="HAMAP" id="MF_00017">
    <property type="entry name" value="RecR"/>
    <property type="match status" value="1"/>
</dbReference>
<dbReference type="InterPro" id="IPR000093">
    <property type="entry name" value="DNA_Rcmb_RecR"/>
</dbReference>
<dbReference type="InterPro" id="IPR023627">
    <property type="entry name" value="Rcmb_RecR"/>
</dbReference>
<dbReference type="InterPro" id="IPR015967">
    <property type="entry name" value="Rcmb_RecR_Znf"/>
</dbReference>
<dbReference type="InterPro" id="IPR006171">
    <property type="entry name" value="TOPRIM_dom"/>
</dbReference>
<dbReference type="InterPro" id="IPR034137">
    <property type="entry name" value="TOPRIM_RecR"/>
</dbReference>
<dbReference type="NCBIfam" id="TIGR00615">
    <property type="entry name" value="recR"/>
    <property type="match status" value="1"/>
</dbReference>
<dbReference type="PANTHER" id="PTHR30446">
    <property type="entry name" value="RECOMBINATION PROTEIN RECR"/>
    <property type="match status" value="1"/>
</dbReference>
<dbReference type="PANTHER" id="PTHR30446:SF0">
    <property type="entry name" value="RECOMBINATION PROTEIN RECR"/>
    <property type="match status" value="1"/>
</dbReference>
<dbReference type="Pfam" id="PF21175">
    <property type="entry name" value="RecR_C"/>
    <property type="match status" value="1"/>
</dbReference>
<dbReference type="Pfam" id="PF21176">
    <property type="entry name" value="RecR_HhH"/>
    <property type="match status" value="1"/>
</dbReference>
<dbReference type="Pfam" id="PF02132">
    <property type="entry name" value="RecR_ZnF"/>
    <property type="match status" value="1"/>
</dbReference>
<dbReference type="Pfam" id="PF13662">
    <property type="entry name" value="Toprim_4"/>
    <property type="match status" value="1"/>
</dbReference>
<dbReference type="SMART" id="SM00493">
    <property type="entry name" value="TOPRIM"/>
    <property type="match status" value="1"/>
</dbReference>
<dbReference type="SUPFAM" id="SSF111304">
    <property type="entry name" value="Recombination protein RecR"/>
    <property type="match status" value="1"/>
</dbReference>
<dbReference type="PROSITE" id="PS01300">
    <property type="entry name" value="RECR"/>
    <property type="match status" value="1"/>
</dbReference>
<dbReference type="PROSITE" id="PS50880">
    <property type="entry name" value="TOPRIM"/>
    <property type="match status" value="1"/>
</dbReference>
<evidence type="ECO:0000255" key="1">
    <source>
        <dbReference type="HAMAP-Rule" id="MF_00017"/>
    </source>
</evidence>
<sequence>MDYYSTQISKLIEELGRLPGIGAKSAQRLAFHIINMPKEQVEHLAKTMLDARSNVKYCKVCQTLTDKEICPICSSEKRDQKVIMVVENTRDLAAYEKTGKFDGVYHVLHGAISPMLGIGPQDIKLKELMLRLQGDVDEVIIATNSSLEGEATAMYISKLIKPAGIKVSRIASGVPVGGDLEYIDEVTLLRALDGRIQL</sequence>
<gene>
    <name evidence="1" type="primary">recR</name>
    <name type="ordered locus">Cphy_0048</name>
</gene>
<name>RECR_LACP7</name>
<accession>A9KQC9</accession>
<protein>
    <recommendedName>
        <fullName evidence="1">Recombination protein RecR</fullName>
    </recommendedName>
</protein>
<reference key="1">
    <citation type="submission" date="2007-11" db="EMBL/GenBank/DDBJ databases">
        <title>Complete genome sequence of Clostridium phytofermentans ISDg.</title>
        <authorList>
            <person name="Leschine S.B."/>
            <person name="Warnick T.A."/>
            <person name="Blanchard J.L."/>
            <person name="Schnell D.J."/>
            <person name="Petit E.L."/>
            <person name="LaTouf W.G."/>
            <person name="Copeland A."/>
            <person name="Lucas S."/>
            <person name="Lapidus A."/>
            <person name="Barry K."/>
            <person name="Glavina del Rio T."/>
            <person name="Dalin E."/>
            <person name="Tice H."/>
            <person name="Pitluck S."/>
            <person name="Kiss H."/>
            <person name="Brettin T."/>
            <person name="Bruce D."/>
            <person name="Detter J.C."/>
            <person name="Han C."/>
            <person name="Kuske C."/>
            <person name="Schmutz J."/>
            <person name="Larimer F."/>
            <person name="Land M."/>
            <person name="Hauser L."/>
            <person name="Kyrpides N."/>
            <person name="Kim E.A."/>
            <person name="Richardson P."/>
        </authorList>
    </citation>
    <scope>NUCLEOTIDE SEQUENCE [LARGE SCALE GENOMIC DNA]</scope>
    <source>
        <strain>ATCC 700394 / DSM 18823 / ISDg</strain>
    </source>
</reference>
<feature type="chain" id="PRO_1000074116" description="Recombination protein RecR">
    <location>
        <begin position="1"/>
        <end position="198"/>
    </location>
</feature>
<feature type="domain" description="Toprim" evidence="1">
    <location>
        <begin position="81"/>
        <end position="175"/>
    </location>
</feature>
<feature type="zinc finger region" description="C4-type" evidence="1">
    <location>
        <begin position="58"/>
        <end position="73"/>
    </location>
</feature>
<proteinExistence type="inferred from homology"/>